<dbReference type="EMBL" id="U47027">
    <property type="protein sequence ID" value="AAA85770.1"/>
    <property type="molecule type" value="Genomic_DNA"/>
</dbReference>
<dbReference type="EMBL" id="U00096">
    <property type="protein sequence ID" value="AAC75368.1"/>
    <property type="molecule type" value="Genomic_DNA"/>
</dbReference>
<dbReference type="EMBL" id="AP009048">
    <property type="protein sequence ID" value="BAA16154.1"/>
    <property type="molecule type" value="Genomic_DNA"/>
</dbReference>
<dbReference type="PIR" id="B65003">
    <property type="entry name" value="B65003"/>
</dbReference>
<dbReference type="RefSeq" id="NP_416811.1">
    <property type="nucleotide sequence ID" value="NC_000913.3"/>
</dbReference>
<dbReference type="RefSeq" id="WP_000965522.1">
    <property type="nucleotide sequence ID" value="NZ_LN832404.1"/>
</dbReference>
<dbReference type="SMR" id="P52094"/>
<dbReference type="BioGRID" id="4260523">
    <property type="interactions" value="8"/>
</dbReference>
<dbReference type="ComplexPortal" id="CPX-4328">
    <property type="entry name" value="Histidine ABC transporter complex"/>
</dbReference>
<dbReference type="ComplexPortal" id="CPX-4329">
    <property type="entry name" value="Polar amino acid ABC transporter complex"/>
</dbReference>
<dbReference type="DIP" id="DIP-9912N"/>
<dbReference type="FunCoup" id="P52094">
    <property type="interactions" value="216"/>
</dbReference>
<dbReference type="STRING" id="511145.b2308"/>
<dbReference type="TCDB" id="3.A.1.3.29">
    <property type="family name" value="the atp-binding cassette (abc) superfamily"/>
</dbReference>
<dbReference type="PaxDb" id="511145-b2308"/>
<dbReference type="EnsemblBacteria" id="AAC75368">
    <property type="protein sequence ID" value="AAC75368"/>
    <property type="gene ID" value="b2308"/>
</dbReference>
<dbReference type="GeneID" id="947235"/>
<dbReference type="KEGG" id="ecj:JW2305"/>
<dbReference type="KEGG" id="eco:b2308"/>
<dbReference type="KEGG" id="ecoc:C3026_12870"/>
<dbReference type="PATRIC" id="fig|1411691.4.peg.4426"/>
<dbReference type="EchoBASE" id="EB2046"/>
<dbReference type="eggNOG" id="COG4215">
    <property type="taxonomic scope" value="Bacteria"/>
</dbReference>
<dbReference type="HOGENOM" id="CLU_019602_1_4_6"/>
<dbReference type="InParanoid" id="P52094"/>
<dbReference type="OMA" id="YYILPRQ"/>
<dbReference type="OrthoDB" id="9815029at2"/>
<dbReference type="PhylomeDB" id="P52094"/>
<dbReference type="BioCyc" id="EcoCyc:HISQ-MONOMER"/>
<dbReference type="PRO" id="PR:P52094"/>
<dbReference type="Proteomes" id="UP000000625">
    <property type="component" value="Chromosome"/>
</dbReference>
<dbReference type="GO" id="GO:0055052">
    <property type="term" value="C:ATP-binding cassette (ABC) transporter complex, substrate-binding subunit-containing"/>
    <property type="evidence" value="ECO:0000303"/>
    <property type="project" value="ComplexPortal"/>
</dbReference>
<dbReference type="GO" id="GO:0016020">
    <property type="term" value="C:membrane"/>
    <property type="evidence" value="ECO:0000303"/>
    <property type="project" value="ComplexPortal"/>
</dbReference>
<dbReference type="GO" id="GO:0005886">
    <property type="term" value="C:plasma membrane"/>
    <property type="evidence" value="ECO:0000314"/>
    <property type="project" value="EcoCyc"/>
</dbReference>
<dbReference type="GO" id="GO:0005291">
    <property type="term" value="F:high-affinity L-histidine transmembrane transporter activity"/>
    <property type="evidence" value="ECO:0000304"/>
    <property type="project" value="EcoCyc"/>
</dbReference>
<dbReference type="GO" id="GO:0089718">
    <property type="term" value="P:amino acid import across plasma membrane"/>
    <property type="evidence" value="ECO:0000303"/>
    <property type="project" value="ComplexPortal"/>
</dbReference>
<dbReference type="GO" id="GO:1903810">
    <property type="term" value="P:L-histidine import across plasma membrane"/>
    <property type="evidence" value="ECO:0000304"/>
    <property type="project" value="EcoCyc"/>
</dbReference>
<dbReference type="GO" id="GO:0089709">
    <property type="term" value="P:L-histidine transmembrane transport"/>
    <property type="evidence" value="ECO:0000304"/>
    <property type="project" value="EcoCyc"/>
</dbReference>
<dbReference type="CDD" id="cd06261">
    <property type="entry name" value="TM_PBP2"/>
    <property type="match status" value="1"/>
</dbReference>
<dbReference type="FunFam" id="1.10.3720.10:FF:000020">
    <property type="entry name" value="Histidine ABC transporter permease HisQ"/>
    <property type="match status" value="1"/>
</dbReference>
<dbReference type="Gene3D" id="1.10.3720.10">
    <property type="entry name" value="MetI-like"/>
    <property type="match status" value="1"/>
</dbReference>
<dbReference type="InterPro" id="IPR010065">
    <property type="entry name" value="AA_ABC_transptr_permease_3TM"/>
</dbReference>
<dbReference type="InterPro" id="IPR051613">
    <property type="entry name" value="ABC_transp_permease_HisMQ"/>
</dbReference>
<dbReference type="InterPro" id="IPR000515">
    <property type="entry name" value="MetI-like"/>
</dbReference>
<dbReference type="InterPro" id="IPR035906">
    <property type="entry name" value="MetI-like_sf"/>
</dbReference>
<dbReference type="NCBIfam" id="TIGR01726">
    <property type="entry name" value="HEQRo_perm_3TM"/>
    <property type="match status" value="1"/>
</dbReference>
<dbReference type="NCBIfam" id="NF011714">
    <property type="entry name" value="PRK15135.1"/>
    <property type="match status" value="1"/>
</dbReference>
<dbReference type="PANTHER" id="PTHR30133">
    <property type="entry name" value="CATIONIC AMINO ACID TRANSPORTER, MEMBRANE COMPONENT"/>
    <property type="match status" value="1"/>
</dbReference>
<dbReference type="PANTHER" id="PTHR30133:SF1">
    <property type="entry name" value="HISTIDINE TRANSPORT SYSTEM PERMEASE PROTEIN HISQ"/>
    <property type="match status" value="1"/>
</dbReference>
<dbReference type="Pfam" id="PF00528">
    <property type="entry name" value="BPD_transp_1"/>
    <property type="match status" value="1"/>
</dbReference>
<dbReference type="SUPFAM" id="SSF161098">
    <property type="entry name" value="MetI-like"/>
    <property type="match status" value="1"/>
</dbReference>
<dbReference type="PROSITE" id="PS50928">
    <property type="entry name" value="ABC_TM1"/>
    <property type="match status" value="1"/>
</dbReference>
<organism>
    <name type="scientific">Escherichia coli (strain K12)</name>
    <dbReference type="NCBI Taxonomy" id="83333"/>
    <lineage>
        <taxon>Bacteria</taxon>
        <taxon>Pseudomonadati</taxon>
        <taxon>Pseudomonadota</taxon>
        <taxon>Gammaproteobacteria</taxon>
        <taxon>Enterobacterales</taxon>
        <taxon>Enterobacteriaceae</taxon>
        <taxon>Escherichia</taxon>
    </lineage>
</organism>
<comment type="function">
    <text evidence="1">Part of the ABC transporter complex HisPMQJ involved in histidine transport. Is also part of the ABC transporter complex HisPMQ-ArgT involved in lysine/arginine/ornithine transport. Probably responsible for the translocation of the substrate across the membrane.</text>
</comment>
<comment type="subunit">
    <text evidence="1">The HisPMQJ complex is composed of two ATP-binding proteins (HisP), two transmembrane proteins (HisM and HisQ) and a solute-binding protein (HisJ). The HisPMQ-ArgT complex is composed of two ATP-binding proteins (HisP), two transmembrane proteins (HisM and HisQ) and a solute-binding protein (ArgT).</text>
</comment>
<comment type="subcellular location">
    <subcellularLocation>
        <location evidence="4">Cell inner membrane</location>
        <topology evidence="2">Multi-pass membrane protein</topology>
    </subcellularLocation>
</comment>
<comment type="similarity">
    <text evidence="5">Belongs to the binding-protein-dependent transport system permease family. HisMQ subfamily.</text>
</comment>
<protein>
    <recommendedName>
        <fullName evidence="5">Histidine/lysine/arginine/ornithine transport system permease protein HisQ</fullName>
    </recommendedName>
</protein>
<name>HISQ_ECOLI</name>
<proteinExistence type="evidence at protein level"/>
<evidence type="ECO:0000250" key="1">
    <source>
        <dbReference type="UniProtKB" id="P0A2I9"/>
    </source>
</evidence>
<evidence type="ECO:0000255" key="2"/>
<evidence type="ECO:0000255" key="3">
    <source>
        <dbReference type="PROSITE-ProRule" id="PRU00441"/>
    </source>
</evidence>
<evidence type="ECO:0000269" key="4">
    <source>
    </source>
</evidence>
<evidence type="ECO:0000305" key="5"/>
<keyword id="KW-0029">Amino-acid transport</keyword>
<keyword id="KW-0997">Cell inner membrane</keyword>
<keyword id="KW-1003">Cell membrane</keyword>
<keyword id="KW-0472">Membrane</keyword>
<keyword id="KW-1185">Reference proteome</keyword>
<keyword id="KW-0812">Transmembrane</keyword>
<keyword id="KW-1133">Transmembrane helix</keyword>
<keyword id="KW-0813">Transport</keyword>
<feature type="chain" id="PRO_0000060050" description="Histidine/lysine/arginine/ornithine transport system permease protein HisQ">
    <location>
        <begin position="1"/>
        <end position="228"/>
    </location>
</feature>
<feature type="topological domain" description="Periplasmic" evidence="5">
    <location>
        <begin position="1"/>
        <end position="12"/>
    </location>
</feature>
<feature type="transmembrane region" description="Helical" evidence="2">
    <location>
        <begin position="13"/>
        <end position="33"/>
    </location>
</feature>
<feature type="topological domain" description="Cytoplasmic" evidence="5">
    <location>
        <begin position="34"/>
        <end position="58"/>
    </location>
</feature>
<feature type="transmembrane region" description="Helical" evidence="2">
    <location>
        <begin position="59"/>
        <end position="79"/>
    </location>
</feature>
<feature type="topological domain" description="Periplasmic" evidence="5">
    <location>
        <begin position="80"/>
        <end position="87"/>
    </location>
</feature>
<feature type="transmembrane region" description="Helical" evidence="2">
    <location>
        <begin position="88"/>
        <end position="108"/>
    </location>
</feature>
<feature type="topological domain" description="Cytoplasmic" evidence="5">
    <location>
        <begin position="109"/>
        <end position="148"/>
    </location>
</feature>
<feature type="transmembrane region" description="Helical" evidence="2">
    <location>
        <begin position="149"/>
        <end position="171"/>
    </location>
</feature>
<feature type="topological domain" description="Periplasmic" evidence="5">
    <location>
        <begin position="172"/>
        <end position="194"/>
    </location>
</feature>
<feature type="transmembrane region" description="Helical" evidence="2">
    <location>
        <begin position="195"/>
        <end position="215"/>
    </location>
</feature>
<feature type="topological domain" description="Cytoplasmic" evidence="4">
    <location>
        <begin position="216"/>
        <end position="228"/>
    </location>
</feature>
<feature type="domain" description="ABC transmembrane type-1" evidence="3">
    <location>
        <begin position="13"/>
        <end position="212"/>
    </location>
</feature>
<feature type="sequence conflict" description="In Ref. 1; AAA85770." evidence="5" ref="1">
    <original>V</original>
    <variation>C</variation>
    <location>
        <position position="15"/>
    </location>
</feature>
<feature type="sequence conflict" description="In Ref. 1; AAA85770." evidence="5" ref="1">
    <original>D</original>
    <variation>Y</variation>
    <location>
        <position position="61"/>
    </location>
</feature>
<feature type="sequence conflict" description="In Ref. 1; AAA85770." evidence="5" ref="1">
    <original>I</original>
    <variation>M</variation>
    <location>
        <position position="88"/>
    </location>
</feature>
<feature type="sequence conflict" description="In Ref. 1; AAA85770." evidence="5" ref="1">
    <original>G</original>
    <variation>C</variation>
    <location>
        <position position="114"/>
    </location>
</feature>
<feature type="sequence conflict" description="In Ref. 1; AAA85770." evidence="5" ref="1">
    <original>P</original>
    <variation>A</variation>
    <location>
        <position position="120"/>
    </location>
</feature>
<feature type="sequence conflict" description="In Ref. 1; AAA85770." evidence="5" ref="1">
    <original>VF</original>
    <variation>MC</variation>
    <location>
        <begin position="137"/>
        <end position="138"/>
    </location>
</feature>
<feature type="sequence conflict" description="In Ref. 1; AAA85770." evidence="5" ref="1">
    <original>V</original>
    <variation>L</variation>
    <location>
        <position position="199"/>
    </location>
</feature>
<accession>P52094</accession>
<accession>P77635</accession>
<reference key="1">
    <citation type="submission" date="1996-01" db="EMBL/GenBank/DDBJ databases">
        <authorList>
            <person name="Joshi A."/>
            <person name="Ames G.F.-L."/>
        </authorList>
    </citation>
    <scope>NUCLEOTIDE SEQUENCE [GENOMIC DNA]</scope>
    <source>
        <strain>K12</strain>
    </source>
</reference>
<reference key="2">
    <citation type="journal article" date="1997" name="DNA Res.">
        <title>Construction of a contiguous 874-kb sequence of the Escherichia coli-K12 genome corresponding to 50.0-68.8 min on the linkage map and analysis of its sequence features.</title>
        <authorList>
            <person name="Yamamoto Y."/>
            <person name="Aiba H."/>
            <person name="Baba T."/>
            <person name="Hayashi K."/>
            <person name="Inada T."/>
            <person name="Isono K."/>
            <person name="Itoh T."/>
            <person name="Kimura S."/>
            <person name="Kitagawa M."/>
            <person name="Makino K."/>
            <person name="Miki T."/>
            <person name="Mitsuhashi N."/>
            <person name="Mizobuchi K."/>
            <person name="Mori H."/>
            <person name="Nakade S."/>
            <person name="Nakamura Y."/>
            <person name="Nashimoto H."/>
            <person name="Oshima T."/>
            <person name="Oyama S."/>
            <person name="Saito N."/>
            <person name="Sampei G."/>
            <person name="Satoh Y."/>
            <person name="Sivasundaram S."/>
            <person name="Tagami H."/>
            <person name="Takahashi H."/>
            <person name="Takeda J."/>
            <person name="Takemoto K."/>
            <person name="Uehara K."/>
            <person name="Wada C."/>
            <person name="Yamagata S."/>
            <person name="Horiuchi T."/>
        </authorList>
    </citation>
    <scope>NUCLEOTIDE SEQUENCE [LARGE SCALE GENOMIC DNA]</scope>
    <source>
        <strain>K12 / W3110 / ATCC 27325 / DSM 5911</strain>
    </source>
</reference>
<reference key="3">
    <citation type="journal article" date="1997" name="Science">
        <title>The complete genome sequence of Escherichia coli K-12.</title>
        <authorList>
            <person name="Blattner F.R."/>
            <person name="Plunkett G. III"/>
            <person name="Bloch C.A."/>
            <person name="Perna N.T."/>
            <person name="Burland V."/>
            <person name="Riley M."/>
            <person name="Collado-Vides J."/>
            <person name="Glasner J.D."/>
            <person name="Rode C.K."/>
            <person name="Mayhew G.F."/>
            <person name="Gregor J."/>
            <person name="Davis N.W."/>
            <person name="Kirkpatrick H.A."/>
            <person name="Goeden M.A."/>
            <person name="Rose D.J."/>
            <person name="Mau B."/>
            <person name="Shao Y."/>
        </authorList>
    </citation>
    <scope>NUCLEOTIDE SEQUENCE [LARGE SCALE GENOMIC DNA]</scope>
    <source>
        <strain>K12 / MG1655 / ATCC 47076</strain>
    </source>
</reference>
<reference key="4">
    <citation type="journal article" date="2006" name="Mol. Syst. Biol.">
        <title>Highly accurate genome sequences of Escherichia coli K-12 strains MG1655 and W3110.</title>
        <authorList>
            <person name="Hayashi K."/>
            <person name="Morooka N."/>
            <person name="Yamamoto Y."/>
            <person name="Fujita K."/>
            <person name="Isono K."/>
            <person name="Choi S."/>
            <person name="Ohtsubo E."/>
            <person name="Baba T."/>
            <person name="Wanner B.L."/>
            <person name="Mori H."/>
            <person name="Horiuchi T."/>
        </authorList>
    </citation>
    <scope>NUCLEOTIDE SEQUENCE [LARGE SCALE GENOMIC DNA]</scope>
    <source>
        <strain>K12 / W3110 / ATCC 27325 / DSM 5911</strain>
    </source>
</reference>
<reference key="5">
    <citation type="journal article" date="2005" name="Science">
        <title>Global topology analysis of the Escherichia coli inner membrane proteome.</title>
        <authorList>
            <person name="Daley D.O."/>
            <person name="Rapp M."/>
            <person name="Granseth E."/>
            <person name="Melen K."/>
            <person name="Drew D."/>
            <person name="von Heijne G."/>
        </authorList>
    </citation>
    <scope>SUBCELLULAR LOCATION</scope>
    <scope>TOPOLOGY [LARGE SCALE ANALYSIS]</scope>
    <source>
        <strain>K12 / MG1655 / ATCC 47076</strain>
    </source>
</reference>
<gene>
    <name type="primary">hisQ</name>
    <name type="ordered locus">b2308</name>
    <name type="ordered locus">JW2305</name>
</gene>
<sequence>MLYGFSGVILQGALVTLELAISSVVLAVIIGLIGAGGKLSQNRLSGLIFEGYTTLIRGVPDLVLMLLIFYGLQIALNTVTEAMGVGQIDIDPMVAGIITLGFIYGAYFTETFRGAFMAVPKGHIEAATAFGFTRGQVFRRIMFPSMMRYALPGIGNNWQVILKSTALVSLLGLEDVVKATQLAGKSTWEPFYFAIVCGVIYLVFTTVSNGVLLFLERRYSVGVKRADL</sequence>